<feature type="chain" id="PRO_0000345928" description="tRNA modification GTPase MnmE">
    <location>
        <begin position="1"/>
        <end position="450"/>
    </location>
</feature>
<feature type="domain" description="TrmE-type G">
    <location>
        <begin position="211"/>
        <end position="372"/>
    </location>
</feature>
<feature type="binding site" evidence="1">
    <location>
        <position position="20"/>
    </location>
    <ligand>
        <name>(6S)-5-formyl-5,6,7,8-tetrahydrofolate</name>
        <dbReference type="ChEBI" id="CHEBI:57457"/>
    </ligand>
</feature>
<feature type="binding site" evidence="1">
    <location>
        <position position="78"/>
    </location>
    <ligand>
        <name>(6S)-5-formyl-5,6,7,8-tetrahydrofolate</name>
        <dbReference type="ChEBI" id="CHEBI:57457"/>
    </ligand>
</feature>
<feature type="binding site" evidence="1">
    <location>
        <position position="117"/>
    </location>
    <ligand>
        <name>(6S)-5-formyl-5,6,7,8-tetrahydrofolate</name>
        <dbReference type="ChEBI" id="CHEBI:57457"/>
    </ligand>
</feature>
<feature type="binding site" evidence="1">
    <location>
        <begin position="221"/>
        <end position="226"/>
    </location>
    <ligand>
        <name>GTP</name>
        <dbReference type="ChEBI" id="CHEBI:37565"/>
    </ligand>
</feature>
<feature type="binding site" evidence="1">
    <location>
        <position position="221"/>
    </location>
    <ligand>
        <name>K(+)</name>
        <dbReference type="ChEBI" id="CHEBI:29103"/>
    </ligand>
</feature>
<feature type="binding site" evidence="1">
    <location>
        <position position="225"/>
    </location>
    <ligand>
        <name>Mg(2+)</name>
        <dbReference type="ChEBI" id="CHEBI:18420"/>
    </ligand>
</feature>
<feature type="binding site" evidence="1">
    <location>
        <begin position="240"/>
        <end position="246"/>
    </location>
    <ligand>
        <name>GTP</name>
        <dbReference type="ChEBI" id="CHEBI:37565"/>
    </ligand>
</feature>
<feature type="binding site" evidence="1">
    <location>
        <position position="240"/>
    </location>
    <ligand>
        <name>K(+)</name>
        <dbReference type="ChEBI" id="CHEBI:29103"/>
    </ligand>
</feature>
<feature type="binding site" evidence="1">
    <location>
        <position position="242"/>
    </location>
    <ligand>
        <name>K(+)</name>
        <dbReference type="ChEBI" id="CHEBI:29103"/>
    </ligand>
</feature>
<feature type="binding site" evidence="1">
    <location>
        <position position="245"/>
    </location>
    <ligand>
        <name>K(+)</name>
        <dbReference type="ChEBI" id="CHEBI:29103"/>
    </ligand>
</feature>
<feature type="binding site" evidence="1">
    <location>
        <position position="246"/>
    </location>
    <ligand>
        <name>Mg(2+)</name>
        <dbReference type="ChEBI" id="CHEBI:18420"/>
    </ligand>
</feature>
<feature type="binding site" evidence="1">
    <location>
        <begin position="265"/>
        <end position="268"/>
    </location>
    <ligand>
        <name>GTP</name>
        <dbReference type="ChEBI" id="CHEBI:37565"/>
    </ligand>
</feature>
<feature type="binding site" evidence="1">
    <location>
        <position position="450"/>
    </location>
    <ligand>
        <name>(6S)-5-formyl-5,6,7,8-tetrahydrofolate</name>
        <dbReference type="ChEBI" id="CHEBI:57457"/>
    </ligand>
</feature>
<name>MNME_THESQ</name>
<accession>B1L9N6</accession>
<sequence length="450" mass="50708">MDTIVAVATPPGKGAIAILRLSGPDSWKIVQKHLRTRSKIVPRKAIHGWIHENGEDVDEVVVVFYKSPKSYTGEDMVEVMCHGGPLVVKKLLDLFLKSGARMAEPGEFTKRAFLNGKMDLTSAEAVRDLIEAKSETSLKLSLRNLKGGLRDFVDSLRRELIEVLAEIRVELDYPDEIETNTGEVVTRLERIKEKLTEELKKADAGILLNRGLRMVIVGKPNVGKSTLLNRLLNEDRAIVTDIPGTTRDVISEEIVIRGILFRIVDTAGVRSETNDLVERLGIERTLQEIEKADIVLFVLDASSPLDEEDRKILERIKNKRYLVVINKVDVVEKINEEEIKNKLGTDRHMVKISALKGEGLEKLEESIYRETQEIFERGSDSLITNLRQKQLLENVKGYLEDAIKSLKEGMPVDMASIDLERALNLLDEVTGRSFREDLLDTIFSNFCVGK</sequence>
<evidence type="ECO:0000255" key="1">
    <source>
        <dbReference type="HAMAP-Rule" id="MF_00379"/>
    </source>
</evidence>
<keyword id="KW-0963">Cytoplasm</keyword>
<keyword id="KW-0342">GTP-binding</keyword>
<keyword id="KW-0378">Hydrolase</keyword>
<keyword id="KW-0460">Magnesium</keyword>
<keyword id="KW-0479">Metal-binding</keyword>
<keyword id="KW-0547">Nucleotide-binding</keyword>
<keyword id="KW-0630">Potassium</keyword>
<keyword id="KW-0819">tRNA processing</keyword>
<protein>
    <recommendedName>
        <fullName evidence="1">tRNA modification GTPase MnmE</fullName>
        <ecNumber evidence="1">3.6.-.-</ecNumber>
    </recommendedName>
</protein>
<reference key="1">
    <citation type="journal article" date="2011" name="J. Bacteriol.">
        <title>Genome sequence of Thermotoga sp. strain RQ2, a hyperthermophilic bacterium isolated from a geothermally heated region of the seafloor near Ribeira Quente, the Azores.</title>
        <authorList>
            <person name="Swithers K.S."/>
            <person name="DiPippo J.L."/>
            <person name="Bruce D.C."/>
            <person name="Detter C."/>
            <person name="Tapia R."/>
            <person name="Han S."/>
            <person name="Saunders E."/>
            <person name="Goodwin L.A."/>
            <person name="Han J."/>
            <person name="Woyke T."/>
            <person name="Pitluck S."/>
            <person name="Pennacchio L."/>
            <person name="Nolan M."/>
            <person name="Mikhailova N."/>
            <person name="Lykidis A."/>
            <person name="Land M.L."/>
            <person name="Brettin T."/>
            <person name="Stetter K.O."/>
            <person name="Nelson K.E."/>
            <person name="Gogarten J.P."/>
            <person name="Noll K.M."/>
        </authorList>
    </citation>
    <scope>NUCLEOTIDE SEQUENCE [LARGE SCALE GENOMIC DNA]</scope>
    <source>
        <strain>RQ2</strain>
    </source>
</reference>
<dbReference type="EC" id="3.6.-.-" evidence="1"/>
<dbReference type="EMBL" id="CP000969">
    <property type="protein sequence ID" value="ACB09034.1"/>
    <property type="molecule type" value="Genomic_DNA"/>
</dbReference>
<dbReference type="RefSeq" id="WP_012310682.1">
    <property type="nucleotide sequence ID" value="NC_010483.1"/>
</dbReference>
<dbReference type="SMR" id="B1L9N6"/>
<dbReference type="KEGG" id="trq:TRQ2_0681"/>
<dbReference type="HOGENOM" id="CLU_019624_4_1_0"/>
<dbReference type="Proteomes" id="UP000001687">
    <property type="component" value="Chromosome"/>
</dbReference>
<dbReference type="GO" id="GO:0005829">
    <property type="term" value="C:cytosol"/>
    <property type="evidence" value="ECO:0007669"/>
    <property type="project" value="TreeGrafter"/>
</dbReference>
<dbReference type="GO" id="GO:0005525">
    <property type="term" value="F:GTP binding"/>
    <property type="evidence" value="ECO:0007669"/>
    <property type="project" value="UniProtKB-UniRule"/>
</dbReference>
<dbReference type="GO" id="GO:0003924">
    <property type="term" value="F:GTPase activity"/>
    <property type="evidence" value="ECO:0007669"/>
    <property type="project" value="UniProtKB-UniRule"/>
</dbReference>
<dbReference type="GO" id="GO:0046872">
    <property type="term" value="F:metal ion binding"/>
    <property type="evidence" value="ECO:0007669"/>
    <property type="project" value="UniProtKB-KW"/>
</dbReference>
<dbReference type="GO" id="GO:0030488">
    <property type="term" value="P:tRNA methylation"/>
    <property type="evidence" value="ECO:0007669"/>
    <property type="project" value="TreeGrafter"/>
</dbReference>
<dbReference type="GO" id="GO:0002098">
    <property type="term" value="P:tRNA wobble uridine modification"/>
    <property type="evidence" value="ECO:0007669"/>
    <property type="project" value="TreeGrafter"/>
</dbReference>
<dbReference type="CDD" id="cd04164">
    <property type="entry name" value="trmE"/>
    <property type="match status" value="1"/>
</dbReference>
<dbReference type="CDD" id="cd14858">
    <property type="entry name" value="TrmE_N"/>
    <property type="match status" value="1"/>
</dbReference>
<dbReference type="FunFam" id="3.30.1360.120:FF:000003">
    <property type="entry name" value="tRNA modification GTPase MnmE"/>
    <property type="match status" value="1"/>
</dbReference>
<dbReference type="FunFam" id="3.40.50.300:FF:000494">
    <property type="entry name" value="tRNA modification GTPase MnmE"/>
    <property type="match status" value="1"/>
</dbReference>
<dbReference type="Gene3D" id="3.40.50.300">
    <property type="entry name" value="P-loop containing nucleotide triphosphate hydrolases"/>
    <property type="match status" value="1"/>
</dbReference>
<dbReference type="Gene3D" id="3.30.1360.120">
    <property type="entry name" value="Probable tRNA modification gtpase trme, domain 1"/>
    <property type="match status" value="1"/>
</dbReference>
<dbReference type="Gene3D" id="1.20.120.430">
    <property type="entry name" value="tRNA modification GTPase MnmE domain 2"/>
    <property type="match status" value="1"/>
</dbReference>
<dbReference type="HAMAP" id="MF_00379">
    <property type="entry name" value="GTPase_MnmE"/>
    <property type="match status" value="1"/>
</dbReference>
<dbReference type="InterPro" id="IPR031168">
    <property type="entry name" value="G_TrmE"/>
</dbReference>
<dbReference type="InterPro" id="IPR006073">
    <property type="entry name" value="GTP-bd"/>
</dbReference>
<dbReference type="InterPro" id="IPR018948">
    <property type="entry name" value="GTP-bd_TrmE_N"/>
</dbReference>
<dbReference type="InterPro" id="IPR004520">
    <property type="entry name" value="GTPase_MnmE"/>
</dbReference>
<dbReference type="InterPro" id="IPR008144">
    <property type="entry name" value="Guanylate_kin-like_dom"/>
</dbReference>
<dbReference type="InterPro" id="IPR027368">
    <property type="entry name" value="MnmE_dom2"/>
</dbReference>
<dbReference type="InterPro" id="IPR025867">
    <property type="entry name" value="MnmE_helical"/>
</dbReference>
<dbReference type="InterPro" id="IPR027417">
    <property type="entry name" value="P-loop_NTPase"/>
</dbReference>
<dbReference type="InterPro" id="IPR005225">
    <property type="entry name" value="Small_GTP-bd"/>
</dbReference>
<dbReference type="InterPro" id="IPR027266">
    <property type="entry name" value="TrmE/GcvT_dom1"/>
</dbReference>
<dbReference type="NCBIfam" id="TIGR00450">
    <property type="entry name" value="mnmE_trmE_thdF"/>
    <property type="match status" value="1"/>
</dbReference>
<dbReference type="NCBIfam" id="NF003661">
    <property type="entry name" value="PRK05291.1-3"/>
    <property type="match status" value="1"/>
</dbReference>
<dbReference type="NCBIfam" id="TIGR00231">
    <property type="entry name" value="small_GTP"/>
    <property type="match status" value="1"/>
</dbReference>
<dbReference type="PANTHER" id="PTHR42714">
    <property type="entry name" value="TRNA MODIFICATION GTPASE GTPBP3"/>
    <property type="match status" value="1"/>
</dbReference>
<dbReference type="PANTHER" id="PTHR42714:SF2">
    <property type="entry name" value="TRNA MODIFICATION GTPASE GTPBP3, MITOCHONDRIAL"/>
    <property type="match status" value="1"/>
</dbReference>
<dbReference type="Pfam" id="PF01926">
    <property type="entry name" value="MMR_HSR1"/>
    <property type="match status" value="1"/>
</dbReference>
<dbReference type="Pfam" id="PF12631">
    <property type="entry name" value="MnmE_helical"/>
    <property type="match status" value="1"/>
</dbReference>
<dbReference type="Pfam" id="PF10396">
    <property type="entry name" value="TrmE_N"/>
    <property type="match status" value="1"/>
</dbReference>
<dbReference type="PRINTS" id="PR00326">
    <property type="entry name" value="GTP1OBG"/>
</dbReference>
<dbReference type="SUPFAM" id="SSF52540">
    <property type="entry name" value="P-loop containing nucleoside triphosphate hydrolases"/>
    <property type="match status" value="1"/>
</dbReference>
<dbReference type="PROSITE" id="PS51709">
    <property type="entry name" value="G_TRME"/>
    <property type="match status" value="1"/>
</dbReference>
<organism>
    <name type="scientific">Thermotoga sp. (strain RQ2)</name>
    <dbReference type="NCBI Taxonomy" id="126740"/>
    <lineage>
        <taxon>Bacteria</taxon>
        <taxon>Thermotogati</taxon>
        <taxon>Thermotogota</taxon>
        <taxon>Thermotogae</taxon>
        <taxon>Thermotogales</taxon>
        <taxon>Thermotogaceae</taxon>
        <taxon>Thermotoga</taxon>
    </lineage>
</organism>
<comment type="function">
    <text evidence="1">Exhibits a very high intrinsic GTPase hydrolysis rate. Involved in the addition of a carboxymethylaminomethyl (cmnm) group at the wobble position (U34) of certain tRNAs, forming tRNA-cmnm(5)s(2)U34.</text>
</comment>
<comment type="cofactor">
    <cofactor evidence="1">
        <name>K(+)</name>
        <dbReference type="ChEBI" id="CHEBI:29103"/>
    </cofactor>
    <text evidence="1">Binds 1 potassium ion per subunit.</text>
</comment>
<comment type="subunit">
    <text evidence="1">Homodimer. Heterotetramer of two MnmE and two MnmG subunits.</text>
</comment>
<comment type="subcellular location">
    <subcellularLocation>
        <location evidence="1">Cytoplasm</location>
    </subcellularLocation>
</comment>
<comment type="similarity">
    <text evidence="1">Belongs to the TRAFAC class TrmE-Era-EngA-EngB-Septin-like GTPase superfamily. TrmE GTPase family.</text>
</comment>
<gene>
    <name evidence="1" type="primary">mnmE</name>
    <name evidence="1" type="synonym">trmE</name>
    <name type="ordered locus">TRQ2_0681</name>
</gene>
<proteinExistence type="inferred from homology"/>